<dbReference type="EMBL" id="L77117">
    <property type="protein sequence ID" value="AAB98263.1"/>
    <property type="molecule type" value="Genomic_DNA"/>
</dbReference>
<dbReference type="SMR" id="P81234"/>
<dbReference type="STRING" id="243232.MJ_0275.1"/>
<dbReference type="PaxDb" id="243232-MJ_0275.1"/>
<dbReference type="EnsemblBacteria" id="AAB98263">
    <property type="protein sequence ID" value="AAB98263"/>
    <property type="gene ID" value="MJ_0275.1"/>
</dbReference>
<dbReference type="KEGG" id="mja:MJ_0275.1"/>
<dbReference type="eggNOG" id="arCOG09660">
    <property type="taxonomic scope" value="Archaea"/>
</dbReference>
<dbReference type="HOGENOM" id="CLU_1754708_0_0_2"/>
<dbReference type="InParanoid" id="P81234"/>
<dbReference type="OrthoDB" id="66048at2157"/>
<dbReference type="Proteomes" id="UP000000805">
    <property type="component" value="Chromosome"/>
</dbReference>
<dbReference type="GO" id="GO:0005886">
    <property type="term" value="C:plasma membrane"/>
    <property type="evidence" value="ECO:0007669"/>
    <property type="project" value="UniProtKB-SubCell"/>
</dbReference>
<proteinExistence type="predicted"/>
<accession>P81234</accession>
<feature type="chain" id="PRO_0000106769" description="Uncharacterized protein MJ0275.1">
    <location>
        <begin position="1"/>
        <end position="148"/>
    </location>
</feature>
<feature type="transmembrane region" description="Helical" evidence="1">
    <location>
        <begin position="16"/>
        <end position="36"/>
    </location>
</feature>
<feature type="transmembrane region" description="Helical" evidence="1">
    <location>
        <begin position="41"/>
        <end position="61"/>
    </location>
</feature>
<gene>
    <name type="ordered locus">MJ0275.1</name>
</gene>
<evidence type="ECO:0000255" key="1"/>
<evidence type="ECO:0000305" key="2"/>
<organism>
    <name type="scientific">Methanocaldococcus jannaschii (strain ATCC 43067 / DSM 2661 / JAL-1 / JCM 10045 / NBRC 100440)</name>
    <name type="common">Methanococcus jannaschii</name>
    <dbReference type="NCBI Taxonomy" id="243232"/>
    <lineage>
        <taxon>Archaea</taxon>
        <taxon>Methanobacteriati</taxon>
        <taxon>Methanobacteriota</taxon>
        <taxon>Methanomada group</taxon>
        <taxon>Methanococci</taxon>
        <taxon>Methanococcales</taxon>
        <taxon>Methanocaldococcaceae</taxon>
        <taxon>Methanocaldococcus</taxon>
    </lineage>
</organism>
<comment type="subcellular location">
    <subcellularLocation>
        <location evidence="2">Cell membrane</location>
        <topology evidence="2">Multi-pass membrane protein</topology>
    </subcellularLocation>
</comment>
<comment type="similarity">
    <text evidence="2">To M.jannaschii MJ0696.</text>
</comment>
<name>Y27B_METJA</name>
<reference key="1">
    <citation type="journal article" date="1996" name="Science">
        <title>Complete genome sequence of the methanogenic archaeon, Methanococcus jannaschii.</title>
        <authorList>
            <person name="Bult C.J."/>
            <person name="White O."/>
            <person name="Olsen G.J."/>
            <person name="Zhou L."/>
            <person name="Fleischmann R.D."/>
            <person name="Sutton G.G."/>
            <person name="Blake J.A."/>
            <person name="FitzGerald L.M."/>
            <person name="Clayton R.A."/>
            <person name="Gocayne J.D."/>
            <person name="Kerlavage A.R."/>
            <person name="Dougherty B.A."/>
            <person name="Tomb J.-F."/>
            <person name="Adams M.D."/>
            <person name="Reich C.I."/>
            <person name="Overbeek R."/>
            <person name="Kirkness E.F."/>
            <person name="Weinstock K.G."/>
            <person name="Merrick J.M."/>
            <person name="Glodek A."/>
            <person name="Scott J.L."/>
            <person name="Geoghagen N.S.M."/>
            <person name="Weidman J.F."/>
            <person name="Fuhrmann J.L."/>
            <person name="Nguyen D."/>
            <person name="Utterback T.R."/>
            <person name="Kelley J.M."/>
            <person name="Peterson J.D."/>
            <person name="Sadow P.W."/>
            <person name="Hanna M.C."/>
            <person name="Cotton M.D."/>
            <person name="Roberts K.M."/>
            <person name="Hurst M.A."/>
            <person name="Kaine B.P."/>
            <person name="Borodovsky M."/>
            <person name="Klenk H.-P."/>
            <person name="Fraser C.M."/>
            <person name="Smith H.O."/>
            <person name="Woese C.R."/>
            <person name="Venter J.C."/>
        </authorList>
    </citation>
    <scope>NUCLEOTIDE SEQUENCE [LARGE SCALE GENOMIC DNA]</scope>
    <source>
        <strain>ATCC 43067 / DSM 2661 / JAL-1 / JCM 10045 / NBRC 100440</strain>
    </source>
</reference>
<keyword id="KW-1003">Cell membrane</keyword>
<keyword id="KW-0472">Membrane</keyword>
<keyword id="KW-1185">Reference proteome</keyword>
<keyword id="KW-0812">Transmembrane</keyword>
<keyword id="KW-1133">Transmembrane helix</keyword>
<sequence length="148" mass="17356">MCGIMRVYRVYNAYKIVGAVIFSMSIIVILYISIILHSLKLSFSIILAVDILIIALFAYIFLKPKKLVVLDNGIKVDNEFYSWDEVIEFFVSLNSIQINLKGKREETFNWETPGLFKYRPQIEYVVKKDAELLKILREKIENKERKRG</sequence>
<protein>
    <recommendedName>
        <fullName>Uncharacterized protein MJ0275.1</fullName>
    </recommendedName>
</protein>